<protein>
    <recommendedName>
        <fullName evidence="1">A-type ATP synthase subunit E</fullName>
    </recommendedName>
</protein>
<gene>
    <name evidence="1" type="primary">atpE</name>
    <name type="ordered locus">NP_1024A</name>
</gene>
<evidence type="ECO:0000255" key="1">
    <source>
        <dbReference type="HAMAP-Rule" id="MF_00311"/>
    </source>
</evidence>
<evidence type="ECO:0000256" key="2">
    <source>
        <dbReference type="SAM" id="MobiDB-lite"/>
    </source>
</evidence>
<organism>
    <name type="scientific">Natronomonas pharaonis (strain ATCC 35678 / DSM 2160 / CIP 103997 / JCM 8858 / NBRC 14720 / NCIMB 2260 / Gabara)</name>
    <name type="common">Halobacterium pharaonis</name>
    <dbReference type="NCBI Taxonomy" id="348780"/>
    <lineage>
        <taxon>Archaea</taxon>
        <taxon>Methanobacteriati</taxon>
        <taxon>Methanobacteriota</taxon>
        <taxon>Stenosarchaea group</taxon>
        <taxon>Halobacteria</taxon>
        <taxon>Halobacteriales</taxon>
        <taxon>Haloarculaceae</taxon>
        <taxon>Natronomonas</taxon>
    </lineage>
</organism>
<accession>Q3ITD1</accession>
<keyword id="KW-0066">ATP synthesis</keyword>
<keyword id="KW-1003">Cell membrane</keyword>
<keyword id="KW-0375">Hydrogen ion transport</keyword>
<keyword id="KW-0406">Ion transport</keyword>
<keyword id="KW-0472">Membrane</keyword>
<keyword id="KW-1185">Reference proteome</keyword>
<keyword id="KW-0813">Transport</keyword>
<reference key="1">
    <citation type="journal article" date="2005" name="Genome Res.">
        <title>Living with two extremes: conclusions from the genome sequence of Natronomonas pharaonis.</title>
        <authorList>
            <person name="Falb M."/>
            <person name="Pfeiffer F."/>
            <person name="Palm P."/>
            <person name="Rodewald K."/>
            <person name="Hickmann V."/>
            <person name="Tittor J."/>
            <person name="Oesterhelt D."/>
        </authorList>
    </citation>
    <scope>NUCLEOTIDE SEQUENCE [LARGE SCALE GENOMIC DNA]</scope>
    <source>
        <strain>ATCC 35678 / DSM 2160 / CIP 103997 / JCM 8858 / NBRC 14720 / NCIMB 2260 / Gabara</strain>
    </source>
</reference>
<sequence length="192" mass="21656">MSLDTVVEDIRDEARARADEIRSEGEERAEEIIDEAEREADDIVDEAEREAERKISQERDQKLSSAKLEAKQARLEARREVLEEVHDDVEAQIADIDGDEREALTRSLLDAAAEEFDGDSVRVHGHEDDADLLEGIVADYDGFEVGEPVDCLGGVVVESDASRVRVNNTFDSILEDVWEENLREISARLFEE</sequence>
<proteinExistence type="inferred from homology"/>
<dbReference type="EMBL" id="CR936257">
    <property type="protein sequence ID" value="CAI48603.1"/>
    <property type="molecule type" value="Genomic_DNA"/>
</dbReference>
<dbReference type="RefSeq" id="WP_011322238.1">
    <property type="nucleotide sequence ID" value="NC_007426.1"/>
</dbReference>
<dbReference type="SMR" id="Q3ITD1"/>
<dbReference type="STRING" id="348780.NP_1024A"/>
<dbReference type="EnsemblBacteria" id="CAI48603">
    <property type="protein sequence ID" value="CAI48603"/>
    <property type="gene ID" value="NP_1024A"/>
</dbReference>
<dbReference type="GeneID" id="3702542"/>
<dbReference type="KEGG" id="nph:NP_1024A"/>
<dbReference type="eggNOG" id="arCOG00869">
    <property type="taxonomic scope" value="Archaea"/>
</dbReference>
<dbReference type="HOGENOM" id="CLU_120786_0_0_2"/>
<dbReference type="OrthoDB" id="4691at2157"/>
<dbReference type="Proteomes" id="UP000002698">
    <property type="component" value="Chromosome"/>
</dbReference>
<dbReference type="GO" id="GO:0005886">
    <property type="term" value="C:plasma membrane"/>
    <property type="evidence" value="ECO:0007669"/>
    <property type="project" value="UniProtKB-SubCell"/>
</dbReference>
<dbReference type="GO" id="GO:0033178">
    <property type="term" value="C:proton-transporting two-sector ATPase complex, catalytic domain"/>
    <property type="evidence" value="ECO:0007669"/>
    <property type="project" value="InterPro"/>
</dbReference>
<dbReference type="GO" id="GO:0005524">
    <property type="term" value="F:ATP binding"/>
    <property type="evidence" value="ECO:0007669"/>
    <property type="project" value="UniProtKB-UniRule"/>
</dbReference>
<dbReference type="GO" id="GO:0046933">
    <property type="term" value="F:proton-transporting ATP synthase activity, rotational mechanism"/>
    <property type="evidence" value="ECO:0007669"/>
    <property type="project" value="UniProtKB-UniRule"/>
</dbReference>
<dbReference type="GO" id="GO:0046961">
    <property type="term" value="F:proton-transporting ATPase activity, rotational mechanism"/>
    <property type="evidence" value="ECO:0007669"/>
    <property type="project" value="InterPro"/>
</dbReference>
<dbReference type="GO" id="GO:0042777">
    <property type="term" value="P:proton motive force-driven plasma membrane ATP synthesis"/>
    <property type="evidence" value="ECO:0007669"/>
    <property type="project" value="UniProtKB-UniRule"/>
</dbReference>
<dbReference type="Gene3D" id="3.30.2320.30">
    <property type="entry name" value="ATP synthase, E subunit, C-terminal"/>
    <property type="match status" value="1"/>
</dbReference>
<dbReference type="Gene3D" id="1.20.5.620">
    <property type="entry name" value="F1F0 ATP synthase subunit B, membrane domain"/>
    <property type="match status" value="1"/>
</dbReference>
<dbReference type="HAMAP" id="MF_00311">
    <property type="entry name" value="ATP_synth_E_arch"/>
    <property type="match status" value="1"/>
</dbReference>
<dbReference type="InterPro" id="IPR038495">
    <property type="entry name" value="ATPase_E_C"/>
</dbReference>
<dbReference type="InterPro" id="IPR002842">
    <property type="entry name" value="ATPase_V1_Esu"/>
</dbReference>
<dbReference type="NCBIfam" id="NF002629">
    <property type="entry name" value="PRK02292.1"/>
    <property type="match status" value="1"/>
</dbReference>
<dbReference type="PANTHER" id="PTHR45715">
    <property type="entry name" value="ATPASE H+-TRANSPORTING V1 SUBUNIT E1A-RELATED"/>
    <property type="match status" value="1"/>
</dbReference>
<dbReference type="Pfam" id="PF01991">
    <property type="entry name" value="vATP-synt_E"/>
    <property type="match status" value="1"/>
</dbReference>
<dbReference type="SUPFAM" id="SSF160527">
    <property type="entry name" value="V-type ATPase subunit E-like"/>
    <property type="match status" value="1"/>
</dbReference>
<name>AATE_NATPD</name>
<comment type="function">
    <text evidence="1">Component of the A-type ATP synthase that produces ATP from ADP in the presence of a proton gradient across the membrane.</text>
</comment>
<comment type="subunit">
    <text evidence="1">Has multiple subunits with at least A(3), B(3), C, D, E, F, H, I and proteolipid K(x).</text>
</comment>
<comment type="subcellular location">
    <subcellularLocation>
        <location evidence="1">Cell membrane</location>
        <topology evidence="1">Peripheral membrane protein</topology>
    </subcellularLocation>
</comment>
<comment type="similarity">
    <text evidence="1">Belongs to the V-ATPase E subunit family.</text>
</comment>
<feature type="chain" id="PRO_1000059420" description="A-type ATP synthase subunit E">
    <location>
        <begin position="1"/>
        <end position="192"/>
    </location>
</feature>
<feature type="region of interest" description="Disordered" evidence="2">
    <location>
        <begin position="1"/>
        <end position="66"/>
    </location>
</feature>
<feature type="compositionally biased region" description="Basic and acidic residues" evidence="2">
    <location>
        <begin position="8"/>
        <end position="26"/>
    </location>
</feature>
<feature type="compositionally biased region" description="Acidic residues" evidence="2">
    <location>
        <begin position="27"/>
        <end position="49"/>
    </location>
</feature>
<feature type="compositionally biased region" description="Basic and acidic residues" evidence="2">
    <location>
        <begin position="50"/>
        <end position="66"/>
    </location>
</feature>